<dbReference type="EMBL" id="CP000653">
    <property type="protein sequence ID" value="ABP62389.1"/>
    <property type="molecule type" value="Genomic_DNA"/>
</dbReference>
<dbReference type="RefSeq" id="WP_015960707.1">
    <property type="nucleotide sequence ID" value="NC_009436.1"/>
</dbReference>
<dbReference type="SMR" id="A4WFA9"/>
<dbReference type="STRING" id="399742.Ent638_3732"/>
<dbReference type="GeneID" id="93306707"/>
<dbReference type="KEGG" id="ent:Ent638_3732"/>
<dbReference type="eggNOG" id="COG0200">
    <property type="taxonomic scope" value="Bacteria"/>
</dbReference>
<dbReference type="HOGENOM" id="CLU_055188_4_2_6"/>
<dbReference type="OrthoDB" id="9810293at2"/>
<dbReference type="Proteomes" id="UP000000230">
    <property type="component" value="Chromosome"/>
</dbReference>
<dbReference type="GO" id="GO:0022625">
    <property type="term" value="C:cytosolic large ribosomal subunit"/>
    <property type="evidence" value="ECO:0007669"/>
    <property type="project" value="TreeGrafter"/>
</dbReference>
<dbReference type="GO" id="GO:0019843">
    <property type="term" value="F:rRNA binding"/>
    <property type="evidence" value="ECO:0007669"/>
    <property type="project" value="UniProtKB-UniRule"/>
</dbReference>
<dbReference type="GO" id="GO:0003735">
    <property type="term" value="F:structural constituent of ribosome"/>
    <property type="evidence" value="ECO:0007669"/>
    <property type="project" value="InterPro"/>
</dbReference>
<dbReference type="GO" id="GO:0006412">
    <property type="term" value="P:translation"/>
    <property type="evidence" value="ECO:0007669"/>
    <property type="project" value="UniProtKB-UniRule"/>
</dbReference>
<dbReference type="FunFam" id="3.100.10.10:FF:000003">
    <property type="entry name" value="50S ribosomal protein L15"/>
    <property type="match status" value="1"/>
</dbReference>
<dbReference type="Gene3D" id="3.100.10.10">
    <property type="match status" value="1"/>
</dbReference>
<dbReference type="HAMAP" id="MF_01341">
    <property type="entry name" value="Ribosomal_uL15"/>
    <property type="match status" value="1"/>
</dbReference>
<dbReference type="InterPro" id="IPR030878">
    <property type="entry name" value="Ribosomal_uL15"/>
</dbReference>
<dbReference type="InterPro" id="IPR021131">
    <property type="entry name" value="Ribosomal_uL15/eL18"/>
</dbReference>
<dbReference type="InterPro" id="IPR036227">
    <property type="entry name" value="Ribosomal_uL15/eL18_sf"/>
</dbReference>
<dbReference type="InterPro" id="IPR005749">
    <property type="entry name" value="Ribosomal_uL15_bac-type"/>
</dbReference>
<dbReference type="InterPro" id="IPR001196">
    <property type="entry name" value="Ribosomal_uL15_CS"/>
</dbReference>
<dbReference type="NCBIfam" id="TIGR01071">
    <property type="entry name" value="rplO_bact"/>
    <property type="match status" value="1"/>
</dbReference>
<dbReference type="PANTHER" id="PTHR12934">
    <property type="entry name" value="50S RIBOSOMAL PROTEIN L15"/>
    <property type="match status" value="1"/>
</dbReference>
<dbReference type="PANTHER" id="PTHR12934:SF11">
    <property type="entry name" value="LARGE RIBOSOMAL SUBUNIT PROTEIN UL15M"/>
    <property type="match status" value="1"/>
</dbReference>
<dbReference type="Pfam" id="PF00828">
    <property type="entry name" value="Ribosomal_L27A"/>
    <property type="match status" value="1"/>
</dbReference>
<dbReference type="SUPFAM" id="SSF52080">
    <property type="entry name" value="Ribosomal proteins L15p and L18e"/>
    <property type="match status" value="1"/>
</dbReference>
<dbReference type="PROSITE" id="PS00475">
    <property type="entry name" value="RIBOSOMAL_L15"/>
    <property type="match status" value="1"/>
</dbReference>
<keyword id="KW-0687">Ribonucleoprotein</keyword>
<keyword id="KW-0689">Ribosomal protein</keyword>
<keyword id="KW-0694">RNA-binding</keyword>
<keyword id="KW-0699">rRNA-binding</keyword>
<gene>
    <name evidence="1" type="primary">rplO</name>
    <name type="ordered locus">Ent638_3732</name>
</gene>
<accession>A4WFA9</accession>
<feature type="chain" id="PRO_1000067664" description="Large ribosomal subunit protein uL15">
    <location>
        <begin position="1"/>
        <end position="144"/>
    </location>
</feature>
<feature type="region of interest" description="Disordered" evidence="2">
    <location>
        <begin position="1"/>
        <end position="54"/>
    </location>
</feature>
<feature type="compositionally biased region" description="Gly residues" evidence="2">
    <location>
        <begin position="21"/>
        <end position="31"/>
    </location>
</feature>
<name>RL15_ENT38</name>
<protein>
    <recommendedName>
        <fullName evidence="1">Large ribosomal subunit protein uL15</fullName>
    </recommendedName>
    <alternativeName>
        <fullName evidence="3">50S ribosomal protein L15</fullName>
    </alternativeName>
</protein>
<evidence type="ECO:0000255" key="1">
    <source>
        <dbReference type="HAMAP-Rule" id="MF_01341"/>
    </source>
</evidence>
<evidence type="ECO:0000256" key="2">
    <source>
        <dbReference type="SAM" id="MobiDB-lite"/>
    </source>
</evidence>
<evidence type="ECO:0000305" key="3"/>
<proteinExistence type="inferred from homology"/>
<reference key="1">
    <citation type="journal article" date="2010" name="PLoS Genet.">
        <title>Genome sequence of the plant growth promoting endophytic bacterium Enterobacter sp. 638.</title>
        <authorList>
            <person name="Taghavi S."/>
            <person name="van der Lelie D."/>
            <person name="Hoffman A."/>
            <person name="Zhang Y.B."/>
            <person name="Walla M.D."/>
            <person name="Vangronsveld J."/>
            <person name="Newman L."/>
            <person name="Monchy S."/>
        </authorList>
    </citation>
    <scope>NUCLEOTIDE SEQUENCE [LARGE SCALE GENOMIC DNA]</scope>
    <source>
        <strain>638</strain>
    </source>
</reference>
<organism>
    <name type="scientific">Enterobacter sp. (strain 638)</name>
    <dbReference type="NCBI Taxonomy" id="399742"/>
    <lineage>
        <taxon>Bacteria</taxon>
        <taxon>Pseudomonadati</taxon>
        <taxon>Pseudomonadota</taxon>
        <taxon>Gammaproteobacteria</taxon>
        <taxon>Enterobacterales</taxon>
        <taxon>Enterobacteriaceae</taxon>
        <taxon>Enterobacter</taxon>
    </lineage>
</organism>
<comment type="function">
    <text evidence="1">Binds to the 23S rRNA.</text>
</comment>
<comment type="subunit">
    <text evidence="1">Part of the 50S ribosomal subunit.</text>
</comment>
<comment type="similarity">
    <text evidence="1">Belongs to the universal ribosomal protein uL15 family.</text>
</comment>
<sequence length="144" mass="14927">MRLNTLSPAEGSKKAGKRLGRGIGSGLGKTGGRGHKGQNSRSGGGVRRGFEGGQMPLYRRLPKFGFTSRKSAITAEIRLSDLAKVEGGVVDLNTLKAANIIGIQIEFAKVILAGEVSTPVTVRGLRVSKGARAAIEAAGGTIEE</sequence>